<evidence type="ECO:0000255" key="1">
    <source>
        <dbReference type="HAMAP-Rule" id="MF_01151"/>
    </source>
</evidence>
<reference key="1">
    <citation type="journal article" date="2005" name="Genome Res.">
        <title>Genome sequence of Blochmannia pennsylvanicus indicates parallel evolutionary trends among bacterial mutualists of insects.</title>
        <authorList>
            <person name="Degnan P.H."/>
            <person name="Lazarus A.B."/>
            <person name="Wernegreen J.J."/>
        </authorList>
    </citation>
    <scope>NUCLEOTIDE SEQUENCE [LARGE SCALE GENOMIC DNA]</scope>
    <source>
        <strain>BPEN</strain>
    </source>
</reference>
<comment type="function">
    <text evidence="1">Participates actively in the response to hyperosmotic and heat shock by preventing the aggregation of stress-denatured proteins, in association with DnaK and GrpE. It is the nucleotide exchange factor for DnaK and may function as a thermosensor. Unfolded proteins bind initially to DnaJ; upon interaction with the DnaJ-bound protein, DnaK hydrolyzes its bound ATP, resulting in the formation of a stable complex. GrpE releases ADP from DnaK; ATP binding to DnaK triggers the release of the substrate protein, thus completing the reaction cycle. Several rounds of ATP-dependent interactions between DnaJ, DnaK and GrpE are required for fully efficient folding.</text>
</comment>
<comment type="subunit">
    <text evidence="1">Homodimer.</text>
</comment>
<comment type="subcellular location">
    <subcellularLocation>
        <location evidence="1">Cytoplasm</location>
    </subcellularLocation>
</comment>
<comment type="similarity">
    <text evidence="1">Belongs to the GrpE family.</text>
</comment>
<keyword id="KW-0143">Chaperone</keyword>
<keyword id="KW-0963">Cytoplasm</keyword>
<keyword id="KW-1185">Reference proteome</keyword>
<keyword id="KW-0346">Stress response</keyword>
<organism>
    <name type="scientific">Blochmanniella pennsylvanica (strain BPEN)</name>
    <dbReference type="NCBI Taxonomy" id="291272"/>
    <lineage>
        <taxon>Bacteria</taxon>
        <taxon>Pseudomonadati</taxon>
        <taxon>Pseudomonadota</taxon>
        <taxon>Gammaproteobacteria</taxon>
        <taxon>Enterobacterales</taxon>
        <taxon>Enterobacteriaceae</taxon>
        <taxon>ant endosymbionts</taxon>
        <taxon>Candidatus Blochmanniella</taxon>
    </lineage>
</organism>
<gene>
    <name evidence="1" type="primary">grpE</name>
    <name type="ordered locus">BPEN_564</name>
</gene>
<sequence length="195" mass="22483">MIDNNVKNNIDESTLQNEKIEKEELLESVSTVDNVIDPKNDQIIKLKIQLAQLQEHERNTVLRLTAEIENIRRRNTQEIEKIHKFGLERFIFELLPVIDNLERTMSISDNSNTLLSAIIEGIELTLKSFLDTVHKFGLKSIYEINVPFNPEIHQAISIIESEDHKPNQVLTMIQKGYILNGRLIRPAMVTVSQSK</sequence>
<feature type="chain" id="PRO_1000137542" description="Protein GrpE">
    <location>
        <begin position="1"/>
        <end position="195"/>
    </location>
</feature>
<proteinExistence type="inferred from homology"/>
<dbReference type="EMBL" id="CP000016">
    <property type="protein sequence ID" value="AAZ41174.1"/>
    <property type="molecule type" value="Genomic_DNA"/>
</dbReference>
<dbReference type="RefSeq" id="WP_011283085.1">
    <property type="nucleotide sequence ID" value="NC_007292.1"/>
</dbReference>
<dbReference type="SMR" id="Q492C7"/>
<dbReference type="STRING" id="291272.BPEN_564"/>
<dbReference type="KEGG" id="bpn:BPEN_564"/>
<dbReference type="eggNOG" id="COG0576">
    <property type="taxonomic scope" value="Bacteria"/>
</dbReference>
<dbReference type="HOGENOM" id="CLU_057217_6_0_6"/>
<dbReference type="OrthoDB" id="9789811at2"/>
<dbReference type="Proteomes" id="UP000007794">
    <property type="component" value="Chromosome"/>
</dbReference>
<dbReference type="GO" id="GO:0005829">
    <property type="term" value="C:cytosol"/>
    <property type="evidence" value="ECO:0007669"/>
    <property type="project" value="TreeGrafter"/>
</dbReference>
<dbReference type="GO" id="GO:0000774">
    <property type="term" value="F:adenyl-nucleotide exchange factor activity"/>
    <property type="evidence" value="ECO:0007669"/>
    <property type="project" value="InterPro"/>
</dbReference>
<dbReference type="GO" id="GO:0042803">
    <property type="term" value="F:protein homodimerization activity"/>
    <property type="evidence" value="ECO:0007669"/>
    <property type="project" value="InterPro"/>
</dbReference>
<dbReference type="GO" id="GO:0051087">
    <property type="term" value="F:protein-folding chaperone binding"/>
    <property type="evidence" value="ECO:0007669"/>
    <property type="project" value="InterPro"/>
</dbReference>
<dbReference type="GO" id="GO:0051082">
    <property type="term" value="F:unfolded protein binding"/>
    <property type="evidence" value="ECO:0007669"/>
    <property type="project" value="TreeGrafter"/>
</dbReference>
<dbReference type="GO" id="GO:0006457">
    <property type="term" value="P:protein folding"/>
    <property type="evidence" value="ECO:0007669"/>
    <property type="project" value="InterPro"/>
</dbReference>
<dbReference type="CDD" id="cd00446">
    <property type="entry name" value="GrpE"/>
    <property type="match status" value="1"/>
</dbReference>
<dbReference type="FunFam" id="2.30.22.10:FF:000001">
    <property type="entry name" value="Protein GrpE"/>
    <property type="match status" value="1"/>
</dbReference>
<dbReference type="Gene3D" id="3.90.20.20">
    <property type="match status" value="1"/>
</dbReference>
<dbReference type="Gene3D" id="2.30.22.10">
    <property type="entry name" value="Head domain of nucleotide exchange factor GrpE"/>
    <property type="match status" value="1"/>
</dbReference>
<dbReference type="HAMAP" id="MF_01151">
    <property type="entry name" value="GrpE"/>
    <property type="match status" value="1"/>
</dbReference>
<dbReference type="InterPro" id="IPR000740">
    <property type="entry name" value="GrpE"/>
</dbReference>
<dbReference type="InterPro" id="IPR013805">
    <property type="entry name" value="GrpE_coiled_coil"/>
</dbReference>
<dbReference type="InterPro" id="IPR009012">
    <property type="entry name" value="GrpE_head"/>
</dbReference>
<dbReference type="NCBIfam" id="NF010738">
    <property type="entry name" value="PRK14140.1"/>
    <property type="match status" value="1"/>
</dbReference>
<dbReference type="NCBIfam" id="NF010748">
    <property type="entry name" value="PRK14150.1"/>
    <property type="match status" value="1"/>
</dbReference>
<dbReference type="PANTHER" id="PTHR21237">
    <property type="entry name" value="GRPE PROTEIN"/>
    <property type="match status" value="1"/>
</dbReference>
<dbReference type="PANTHER" id="PTHR21237:SF23">
    <property type="entry name" value="GRPE PROTEIN HOMOLOG, MITOCHONDRIAL"/>
    <property type="match status" value="1"/>
</dbReference>
<dbReference type="Pfam" id="PF01025">
    <property type="entry name" value="GrpE"/>
    <property type="match status" value="1"/>
</dbReference>
<dbReference type="PRINTS" id="PR00773">
    <property type="entry name" value="GRPEPROTEIN"/>
</dbReference>
<dbReference type="SUPFAM" id="SSF58014">
    <property type="entry name" value="Coiled-coil domain of nucleotide exchange factor GrpE"/>
    <property type="match status" value="1"/>
</dbReference>
<dbReference type="SUPFAM" id="SSF51064">
    <property type="entry name" value="Head domain of nucleotide exchange factor GrpE"/>
    <property type="match status" value="1"/>
</dbReference>
<dbReference type="PROSITE" id="PS01071">
    <property type="entry name" value="GRPE"/>
    <property type="match status" value="1"/>
</dbReference>
<accession>Q492C7</accession>
<name>GRPE_BLOPB</name>
<protein>
    <recommendedName>
        <fullName evidence="1">Protein GrpE</fullName>
    </recommendedName>
    <alternativeName>
        <fullName evidence="1">HSP-70 cofactor</fullName>
    </alternativeName>
</protein>